<proteinExistence type="evidence at protein level"/>
<reference key="1">
    <citation type="journal article" date="2022" name="Front. Microbiol.">
        <title>Cloning and functional characterization of the polyketide synthases based on genome mining of Preussia isomera XL-1326.</title>
        <authorList>
            <person name="Liu Q."/>
            <person name="Zhang D."/>
            <person name="Xu Y."/>
            <person name="Gao S."/>
            <person name="Gong Y."/>
            <person name="Cai X."/>
            <person name="Yao M."/>
            <person name="Yang X."/>
        </authorList>
    </citation>
    <scope>NUCLEOTIDE SEQUENCE [MRNA]</scope>
    <scope>FUNCTION</scope>
    <scope>DOMAIN</scope>
    <scope>CATALYTIC ACTIVITY</scope>
    <source>
        <strain>XL-1326</strain>
    </source>
</reference>
<feature type="chain" id="PRO_0000456458" description="Non-reducing polyketide synthase Preu8">
    <location>
        <begin position="1"/>
        <end position="2158"/>
    </location>
</feature>
<feature type="domain" description="Ketosynthase family 3 (KS3)" evidence="4 10">
    <location>
        <begin position="369"/>
        <end position="801"/>
    </location>
</feature>
<feature type="domain" description="PKS/mFAS DH" evidence="5">
    <location>
        <begin position="1287"/>
        <end position="1598"/>
    </location>
</feature>
<feature type="domain" description="Carrier 1" evidence="3">
    <location>
        <begin position="1651"/>
        <end position="1725"/>
    </location>
</feature>
<feature type="domain" description="Carrier 2" evidence="3">
    <location>
        <begin position="1779"/>
        <end position="1853"/>
    </location>
</feature>
<feature type="region of interest" description="N-terminal acylcarrier protein transacylase domain (SAT)" evidence="2 10">
    <location>
        <begin position="4"/>
        <end position="241"/>
    </location>
</feature>
<feature type="region of interest" description="Malonyl-CoA:ACP transacylase (MAT) domain" evidence="2 10">
    <location>
        <begin position="900"/>
        <end position="1215"/>
    </location>
</feature>
<feature type="region of interest" description="Product template (PT) domain" evidence="2 10">
    <location>
        <begin position="1285"/>
        <end position="1603"/>
    </location>
</feature>
<feature type="region of interest" description="N-terminal hotdog fold" evidence="5">
    <location>
        <begin position="1287"/>
        <end position="1423"/>
    </location>
</feature>
<feature type="region of interest" description="C-terminal hotdog fold" evidence="5">
    <location>
        <begin position="1451"/>
        <end position="1598"/>
    </location>
</feature>
<feature type="region of interest" description="Disordered" evidence="7">
    <location>
        <begin position="1619"/>
        <end position="1654"/>
    </location>
</feature>
<feature type="region of interest" description="Disordered" evidence="7">
    <location>
        <begin position="1723"/>
        <end position="1779"/>
    </location>
</feature>
<feature type="region of interest" description="Disordered" evidence="7">
    <location>
        <begin position="1847"/>
        <end position="1879"/>
    </location>
</feature>
<feature type="region of interest" description="Thioesterase (TE) domain" evidence="2 10">
    <location>
        <begin position="1894"/>
        <end position="2144"/>
    </location>
</feature>
<feature type="compositionally biased region" description="Low complexity" evidence="7">
    <location>
        <begin position="1619"/>
        <end position="1639"/>
    </location>
</feature>
<feature type="compositionally biased region" description="Acidic residues" evidence="7">
    <location>
        <begin position="1731"/>
        <end position="1740"/>
    </location>
</feature>
<feature type="compositionally biased region" description="Polar residues" evidence="7">
    <location>
        <begin position="1743"/>
        <end position="1770"/>
    </location>
</feature>
<feature type="compositionally biased region" description="Low complexity" evidence="7">
    <location>
        <begin position="1860"/>
        <end position="1876"/>
    </location>
</feature>
<feature type="active site" description="For beta-ketoacyl synthase activity" evidence="4">
    <location>
        <position position="541"/>
    </location>
</feature>
<feature type="active site" description="For beta-ketoacyl synthase activity" evidence="4">
    <location>
        <position position="676"/>
    </location>
</feature>
<feature type="active site" description="For beta-ketoacyl synthase activity" evidence="4">
    <location>
        <position position="719"/>
    </location>
</feature>
<feature type="active site" description="For acyl/malonyl transferase activity" evidence="6">
    <location>
        <position position="989"/>
    </location>
</feature>
<feature type="active site" description="Proton acceptor; for dehydratase activity" evidence="5">
    <location>
        <position position="1319"/>
    </location>
</feature>
<feature type="active site" description="Proton donor; for dehydratase activity" evidence="5">
    <location>
        <position position="1511"/>
    </location>
</feature>
<feature type="modified residue" description="O-(pantetheine 4'-phosphoryl)serine" evidence="3">
    <location>
        <position position="1685"/>
    </location>
</feature>
<feature type="modified residue" description="O-(pantetheine 4'-phosphoryl)serine" evidence="3">
    <location>
        <position position="1813"/>
    </location>
</feature>
<sequence>MNVLVLGDQVADHLQLLENTYHRKNNASVKGFLDRATDVLLSEIAKLPKRQRENIPEFRTILNLVQLYRERGLAIPHVESALVTVSQLAYYIGYFADYPTDLPNPENKRVLGLCTGQLAASVVASSHTLDELLPIALEAVKLAFRTGLEVACQGEAIEQGPLSSEKWSTVVQDITEDEAMSLIDNFHKERKIPVSAHAYISAVAPTSITVSGPPSTTKELFEIEELSKKRKTPIPVFAPYHASHLYDASVIDRIIGDSAEVLKRYRSRALFHSASTGKCHITTDTLELVRVALREILLEPVRWSSLIEECVSQVLESGDTECTVFPIGATMVTNSLVSTLKAAGQSSLSVRVSKPWGPDWEGTKGRTQNDKIAIVGMSGRFPSAASHEELWELLAKGLDVHREIPSDRFDAQAHCDPSGKGKNKSHTPYGCFIDEPGMFDPRFFNMSPREAAQTDPMGRLALTTAYEALEMSGYVPNRTPSSMLNRIGTFYGQTSDDWREINAAENVDTYFITGGVRAFAPGRINYYFKFSGPSFSIDTACSSSLAAIQLACTSLWAGDCDTACAGGLNVLTNPDIFSGLSKGQFLSKTGGCKTYDNDADGYCRGDGCGTVILKRYEDAIADKDNILGCILGAATNHSAEAVSITHPHAGAQEFLYKKVLANAGVDAHEITYVEMHGTGTQAGDGIEMTSVTNAFAPRNRQRRPDQPLYLGAIKANIGHGEAASGINSLVKCMMMLKKNAIPANVGIKGVMNKTFPKDLAQRNVHIETEMVPYPRKGAEKRKMFLNNFSAAGGNTAIILEDGPLREAPKGVDPRTSQVVTITGRSISSLKKNIDNLIKYLDQNPDTTLPSLAYTTTARRIQHNYRVAVVVSDISQVKDALKNQIKDSYSPVAMVSTKTAFTFTGQGSQYTGLGKKLYEEMGSFKSDIHQLDNLARLHSLPSIIPLLDGSTDVAKLSPVVVQLGMACIQVALSRMWASWGVTPSAVIGHSLGEYAALHVAGVISASDMVLLVGRRAQLLEKECTAHTHGMLAVKGGVESISDALGDKMIEIACMNGPEETVLCGKVDVIESTADALATKGFKATKLNVPFAFHSAQVEPILEKFQDVATSVKFKKPVVPVLSPLNGEVIREAGIIGPKYLADHARRTVDFWHALSAGKDEKAFDEKTAWLEIGAHPVCSGMVKSSLGGSPCTAGSLRRNEDPWKTLANSVSTLFLAGVGIDFPEYHRQFDDAHELLTLPTYAFDNKKYWLDYHNNWTLTKGEARTDAAPKTIEAPAEVKSKLSTTSCQRIVREELHANSGTVVVQSDLSDPKLRATISGHQVNGTPLCPSSLYADQAMTLADYLYKQLRPNLPTPGLNVCAMEVPKTLIPQYPPPAGGQHLQIEATADLEHNRVEVRFRTVPADGSKILAEHAFGTVKYEDVSQWKEEWARTQYMVQTQIDLLKQKLVSGSAHKVLRGMAYKLFKALVSYADNYRGMEEVILDGKQTEATATVKFQTTPEDGSFFCSPYWIDSLAHLSGFIVNASDHLDSENSVYISHGWGSIKISKQLSPEKRYQSYVRMQPAPGNISVGDVYILEGEEVIGLVTGLKFQNIARRVLNIMMPPAGGAAKAAGGKAAPAKKAASPTLAPAKAAKPAAKTSKPSKARAKPAADSTTSRVMKIIATETDVDMAELVDEAAFENLGVDSLMSLTISAKFREELDLEISSTLFTDHPTVGQMKKFFSQYDGAPIPDDGDDSDGTDEPSNFSTPSYGADNASTPPSSAPSVNGKSSPENHEVLESTEVSLARKIVAEEMGVDVAEITDKADLSEMGMDSLMSLTILGALRESTGIDLPSTFLVTNVTIEDIENELGMRPKPKPKAEAAPPKSSAKASPSANKQPQLSAVNEKLKNIVDVSQYPPANSVLLQGNPKIATKKMFLVPDGSGSATSYISVPPISPDLAVFGLNCPFMKSPEKWTCGVEGVSALYLAEIKRRQPKGPYIIGGWSAGGVMAYEVTQQLVNSGEVVERLVLIDAPCPVALDPLPARLHIFFDQIGLLGTGKPGGTPKWLLPHFASAIQNLKDYEPIPMDPQRAPEVFAIWCTDGVCPNPDDPRPPPGEGEDPAPMKWLLNNRTDFEDNGWAQLLPKKNFTYAVMGGNHFTMMKGDHGAKLGEHLKEGLKL</sequence>
<name>PREU8_PREIS</name>
<comment type="function">
    <text evidence="10">Non-reducing polyketide synthase; part of a gene cluster that mediates the biosynthesis of a yet unidentified natural product.</text>
</comment>
<comment type="cofactor">
    <cofactor evidence="3">
        <name>pantetheine 4'-phosphate</name>
        <dbReference type="ChEBI" id="CHEBI:47942"/>
    </cofactor>
</comment>
<comment type="domain">
    <text evidence="10">Multidomain protein; including a starter unit:ACP transacylase (SAT) that selects the starter unit; a ketosynthase (KS) that catalyzes repeated decarboxylative condensation to elongate the polyketide backbone; a malonyl-CoA:ACP transacylase (MAT) that selects and transfers the extender unit malonyl-CoA; a product template (PT) domain that controls the immediate cyclization regioselectivity of the reactive polyketide backbone; and an acyl-carrier protein (ACP) that serves as the tether of the growing and completed polyketide via its phosphopantetheinyl arm.</text>
</comment>
<comment type="domain">
    <text evidence="1">The release of the polyketide chain from the non-reducing polyketide synthase is mediated by the thioesterase (TE) domain localized at the C-ter of the protein.</text>
</comment>
<accession>P9WET3</accession>
<organism>
    <name type="scientific">Preussia isomera</name>
    <name type="common">Coprophilous fungus</name>
    <name type="synonym">Honoratia pisana</name>
    <dbReference type="NCBI Taxonomy" id="325670"/>
    <lineage>
        <taxon>Eukaryota</taxon>
        <taxon>Fungi</taxon>
        <taxon>Dikarya</taxon>
        <taxon>Ascomycota</taxon>
        <taxon>Pezizomycotina</taxon>
        <taxon>Dothideomycetes</taxon>
        <taxon>Pleosporomycetidae</taxon>
        <taxon>Pleosporales</taxon>
        <taxon>Sporormiaceae</taxon>
        <taxon>Preussia/Sporomiella species complex</taxon>
        <taxon>Preussia</taxon>
    </lineage>
</organism>
<evidence type="ECO:0000250" key="1">
    <source>
        <dbReference type="UniProtKB" id="Q5ATJ7"/>
    </source>
</evidence>
<evidence type="ECO:0000255" key="2"/>
<evidence type="ECO:0000255" key="3">
    <source>
        <dbReference type="PROSITE-ProRule" id="PRU00258"/>
    </source>
</evidence>
<evidence type="ECO:0000255" key="4">
    <source>
        <dbReference type="PROSITE-ProRule" id="PRU01348"/>
    </source>
</evidence>
<evidence type="ECO:0000255" key="5">
    <source>
        <dbReference type="PROSITE-ProRule" id="PRU01363"/>
    </source>
</evidence>
<evidence type="ECO:0000255" key="6">
    <source>
        <dbReference type="PROSITE-ProRule" id="PRU10022"/>
    </source>
</evidence>
<evidence type="ECO:0000256" key="7">
    <source>
        <dbReference type="SAM" id="MobiDB-lite"/>
    </source>
</evidence>
<evidence type="ECO:0000269" key="8">
    <source>
    </source>
</evidence>
<evidence type="ECO:0000303" key="9">
    <source>
    </source>
</evidence>
<evidence type="ECO:0000305" key="10">
    <source>
    </source>
</evidence>
<dbReference type="EC" id="2.3.1.-" evidence="8"/>
<dbReference type="EMBL" id="OK493440">
    <property type="protein sequence ID" value="UNY67718.1"/>
    <property type="molecule type" value="mRNA"/>
</dbReference>
<dbReference type="SMR" id="P9WET3"/>
<dbReference type="GO" id="GO:0004315">
    <property type="term" value="F:3-oxoacyl-[acyl-carrier-protein] synthase activity"/>
    <property type="evidence" value="ECO:0007669"/>
    <property type="project" value="InterPro"/>
</dbReference>
<dbReference type="GO" id="GO:0004312">
    <property type="term" value="F:fatty acid synthase activity"/>
    <property type="evidence" value="ECO:0007669"/>
    <property type="project" value="TreeGrafter"/>
</dbReference>
<dbReference type="GO" id="GO:0031177">
    <property type="term" value="F:phosphopantetheine binding"/>
    <property type="evidence" value="ECO:0007669"/>
    <property type="project" value="InterPro"/>
</dbReference>
<dbReference type="GO" id="GO:0006633">
    <property type="term" value="P:fatty acid biosynthetic process"/>
    <property type="evidence" value="ECO:0007669"/>
    <property type="project" value="InterPro"/>
</dbReference>
<dbReference type="GO" id="GO:0046189">
    <property type="term" value="P:phenol-containing compound biosynthetic process"/>
    <property type="evidence" value="ECO:0007669"/>
    <property type="project" value="UniProtKB-ARBA"/>
</dbReference>
<dbReference type="GO" id="GO:0030639">
    <property type="term" value="P:polyketide biosynthetic process"/>
    <property type="evidence" value="ECO:0007669"/>
    <property type="project" value="UniProtKB-ARBA"/>
</dbReference>
<dbReference type="GO" id="GO:0009403">
    <property type="term" value="P:toxin biosynthetic process"/>
    <property type="evidence" value="ECO:0007669"/>
    <property type="project" value="UniProtKB-ARBA"/>
</dbReference>
<dbReference type="CDD" id="cd00833">
    <property type="entry name" value="PKS"/>
    <property type="match status" value="1"/>
</dbReference>
<dbReference type="FunFam" id="3.40.366.10:FF:000002">
    <property type="entry name" value="Probable polyketide synthase 2"/>
    <property type="match status" value="1"/>
</dbReference>
<dbReference type="FunFam" id="1.10.1200.10:FF:000011">
    <property type="entry name" value="Sterigmatocystin biosynthesis polyketide synthase"/>
    <property type="match status" value="1"/>
</dbReference>
<dbReference type="FunFam" id="3.10.129.110:FF:000001">
    <property type="entry name" value="Sterigmatocystin biosynthesis polyketide synthase"/>
    <property type="match status" value="1"/>
</dbReference>
<dbReference type="FunFam" id="3.40.50.1820:FF:000116">
    <property type="entry name" value="Sterigmatocystin biosynthesis polyketide synthase"/>
    <property type="match status" value="1"/>
</dbReference>
<dbReference type="Gene3D" id="3.30.70.3290">
    <property type="match status" value="1"/>
</dbReference>
<dbReference type="Gene3D" id="3.40.47.10">
    <property type="match status" value="1"/>
</dbReference>
<dbReference type="Gene3D" id="1.10.1200.10">
    <property type="entry name" value="ACP-like"/>
    <property type="match status" value="2"/>
</dbReference>
<dbReference type="Gene3D" id="3.40.50.1820">
    <property type="entry name" value="alpha/beta hydrolase"/>
    <property type="match status" value="1"/>
</dbReference>
<dbReference type="Gene3D" id="3.40.366.10">
    <property type="entry name" value="Malonyl-Coenzyme A Acyl Carrier Protein, domain 2"/>
    <property type="match status" value="2"/>
</dbReference>
<dbReference type="Gene3D" id="3.10.129.110">
    <property type="entry name" value="Polyketide synthase dehydratase"/>
    <property type="match status" value="1"/>
</dbReference>
<dbReference type="InterPro" id="IPR029058">
    <property type="entry name" value="AB_hydrolase_fold"/>
</dbReference>
<dbReference type="InterPro" id="IPR001227">
    <property type="entry name" value="Ac_transferase_dom_sf"/>
</dbReference>
<dbReference type="InterPro" id="IPR036736">
    <property type="entry name" value="ACP-like_sf"/>
</dbReference>
<dbReference type="InterPro" id="IPR014043">
    <property type="entry name" value="Acyl_transferase_dom"/>
</dbReference>
<dbReference type="InterPro" id="IPR016035">
    <property type="entry name" value="Acyl_Trfase/lysoPLipase"/>
</dbReference>
<dbReference type="InterPro" id="IPR018201">
    <property type="entry name" value="Ketoacyl_synth_AS"/>
</dbReference>
<dbReference type="InterPro" id="IPR014031">
    <property type="entry name" value="Ketoacyl_synth_C"/>
</dbReference>
<dbReference type="InterPro" id="IPR014030">
    <property type="entry name" value="Ketoacyl_synth_N"/>
</dbReference>
<dbReference type="InterPro" id="IPR016036">
    <property type="entry name" value="Malonyl_transacylase_ACP-bd"/>
</dbReference>
<dbReference type="InterPro" id="IPR020841">
    <property type="entry name" value="PKS_Beta-ketoAc_synthase_dom"/>
</dbReference>
<dbReference type="InterPro" id="IPR042104">
    <property type="entry name" value="PKS_dehydratase_sf"/>
</dbReference>
<dbReference type="InterPro" id="IPR049551">
    <property type="entry name" value="PKS_DH_C"/>
</dbReference>
<dbReference type="InterPro" id="IPR049900">
    <property type="entry name" value="PKS_mFAS_DH"/>
</dbReference>
<dbReference type="InterPro" id="IPR050091">
    <property type="entry name" value="PKS_NRPS_Biosynth_Enz"/>
</dbReference>
<dbReference type="InterPro" id="IPR020806">
    <property type="entry name" value="PKS_PP-bd"/>
</dbReference>
<dbReference type="InterPro" id="IPR009081">
    <property type="entry name" value="PP-bd_ACP"/>
</dbReference>
<dbReference type="InterPro" id="IPR006162">
    <property type="entry name" value="Ppantetheine_attach_site"/>
</dbReference>
<dbReference type="InterPro" id="IPR030918">
    <property type="entry name" value="PT_fungal_PKS"/>
</dbReference>
<dbReference type="InterPro" id="IPR032088">
    <property type="entry name" value="SAT"/>
</dbReference>
<dbReference type="InterPro" id="IPR001031">
    <property type="entry name" value="Thioesterase"/>
</dbReference>
<dbReference type="InterPro" id="IPR016039">
    <property type="entry name" value="Thiolase-like"/>
</dbReference>
<dbReference type="NCBIfam" id="TIGR04532">
    <property type="entry name" value="PT_fungal_PKS"/>
    <property type="match status" value="1"/>
</dbReference>
<dbReference type="PANTHER" id="PTHR43775">
    <property type="entry name" value="FATTY ACID SYNTHASE"/>
    <property type="match status" value="1"/>
</dbReference>
<dbReference type="PANTHER" id="PTHR43775:SF37">
    <property type="entry name" value="SI:DKEY-61P9.11"/>
    <property type="match status" value="1"/>
</dbReference>
<dbReference type="Pfam" id="PF00698">
    <property type="entry name" value="Acyl_transf_1"/>
    <property type="match status" value="1"/>
</dbReference>
<dbReference type="Pfam" id="PF22621">
    <property type="entry name" value="CurL-like_PKS_C"/>
    <property type="match status" value="1"/>
</dbReference>
<dbReference type="Pfam" id="PF00109">
    <property type="entry name" value="ketoacyl-synt"/>
    <property type="match status" value="1"/>
</dbReference>
<dbReference type="Pfam" id="PF02801">
    <property type="entry name" value="Ketoacyl-synt_C"/>
    <property type="match status" value="1"/>
</dbReference>
<dbReference type="Pfam" id="PF00550">
    <property type="entry name" value="PP-binding"/>
    <property type="match status" value="2"/>
</dbReference>
<dbReference type="Pfam" id="PF14765">
    <property type="entry name" value="PS-DH"/>
    <property type="match status" value="1"/>
</dbReference>
<dbReference type="Pfam" id="PF16073">
    <property type="entry name" value="SAT"/>
    <property type="match status" value="1"/>
</dbReference>
<dbReference type="Pfam" id="PF00975">
    <property type="entry name" value="Thioesterase"/>
    <property type="match status" value="1"/>
</dbReference>
<dbReference type="SMART" id="SM00827">
    <property type="entry name" value="PKS_AT"/>
    <property type="match status" value="1"/>
</dbReference>
<dbReference type="SMART" id="SM00825">
    <property type="entry name" value="PKS_KS"/>
    <property type="match status" value="1"/>
</dbReference>
<dbReference type="SMART" id="SM00823">
    <property type="entry name" value="PKS_PP"/>
    <property type="match status" value="2"/>
</dbReference>
<dbReference type="SUPFAM" id="SSF47336">
    <property type="entry name" value="ACP-like"/>
    <property type="match status" value="2"/>
</dbReference>
<dbReference type="SUPFAM" id="SSF53474">
    <property type="entry name" value="alpha/beta-Hydrolases"/>
    <property type="match status" value="1"/>
</dbReference>
<dbReference type="SUPFAM" id="SSF52151">
    <property type="entry name" value="FabD/lysophospholipase-like"/>
    <property type="match status" value="1"/>
</dbReference>
<dbReference type="SUPFAM" id="SSF55048">
    <property type="entry name" value="Probable ACP-binding domain of malonyl-CoA ACP transacylase"/>
    <property type="match status" value="1"/>
</dbReference>
<dbReference type="SUPFAM" id="SSF53901">
    <property type="entry name" value="Thiolase-like"/>
    <property type="match status" value="1"/>
</dbReference>
<dbReference type="PROSITE" id="PS50075">
    <property type="entry name" value="CARRIER"/>
    <property type="match status" value="2"/>
</dbReference>
<dbReference type="PROSITE" id="PS00606">
    <property type="entry name" value="KS3_1"/>
    <property type="match status" value="1"/>
</dbReference>
<dbReference type="PROSITE" id="PS52004">
    <property type="entry name" value="KS3_2"/>
    <property type="match status" value="1"/>
</dbReference>
<dbReference type="PROSITE" id="PS00012">
    <property type="entry name" value="PHOSPHOPANTETHEINE"/>
    <property type="match status" value="1"/>
</dbReference>
<dbReference type="PROSITE" id="PS52019">
    <property type="entry name" value="PKS_MFAS_DH"/>
    <property type="match status" value="1"/>
</dbReference>
<protein>
    <recommendedName>
        <fullName evidence="9">Non-reducing polyketide synthase Preu8</fullName>
        <shortName evidence="9">NR-PKS Preu8</shortName>
        <ecNumber evidence="8">2.3.1.-</ecNumber>
    </recommendedName>
</protein>
<keyword id="KW-0511">Multifunctional enzyme</keyword>
<keyword id="KW-0596">Phosphopantetheine</keyword>
<keyword id="KW-0597">Phosphoprotein</keyword>
<keyword id="KW-0677">Repeat</keyword>
<keyword id="KW-0808">Transferase</keyword>
<gene>
    <name evidence="9" type="primary">Preu8</name>
</gene>